<accession>P67604</accession>
<accession>Q46828</accession>
<feature type="chain" id="PRO_0000214601" description="N(4)-acetylcytidine amidohydrolase">
    <location>
        <begin position="1"/>
        <end position="103"/>
    </location>
</feature>
<feature type="domain" description="ASCH" evidence="1">
    <location>
        <begin position="6"/>
        <end position="101"/>
    </location>
</feature>
<feature type="active site" description="Proton acceptor" evidence="2">
    <location>
        <position position="21"/>
    </location>
</feature>
<feature type="active site" description="Nucleophile" evidence="2">
    <location>
        <position position="24"/>
    </location>
</feature>
<feature type="active site" description="Proton donor" evidence="2">
    <location>
        <position position="74"/>
    </location>
</feature>
<organism>
    <name type="scientific">Escherichia coli O157:H7</name>
    <dbReference type="NCBI Taxonomy" id="83334"/>
    <lineage>
        <taxon>Bacteria</taxon>
        <taxon>Pseudomonadati</taxon>
        <taxon>Pseudomonadota</taxon>
        <taxon>Gammaproteobacteria</taxon>
        <taxon>Enterobacterales</taxon>
        <taxon>Enterobacteriaceae</taxon>
        <taxon>Escherichia</taxon>
    </lineage>
</organism>
<evidence type="ECO:0000255" key="1"/>
<evidence type="ECO:0000255" key="2">
    <source>
        <dbReference type="HAMAP-Rule" id="MF_00684"/>
    </source>
</evidence>
<keyword id="KW-0378">Hydrolase</keyword>
<keyword id="KW-1185">Reference proteome</keyword>
<name>AC4CH_ECO57</name>
<protein>
    <recommendedName>
        <fullName evidence="2">N(4)-acetylcytidine amidohydrolase</fullName>
        <shortName evidence="2">ac4C amidohydrolase</shortName>
        <ecNumber evidence="2">3.5.1.135</ecNumber>
    </recommendedName>
</protein>
<dbReference type="EC" id="3.5.1.135" evidence="2"/>
<dbReference type="EMBL" id="AE005174">
    <property type="protein sequence ID" value="AAG58028.1"/>
    <property type="molecule type" value="Genomic_DNA"/>
</dbReference>
<dbReference type="EMBL" id="BA000007">
    <property type="protein sequence ID" value="BAB37195.1"/>
    <property type="molecule type" value="Genomic_DNA"/>
</dbReference>
<dbReference type="PIR" id="D91100">
    <property type="entry name" value="D91100"/>
</dbReference>
<dbReference type="PIR" id="H85945">
    <property type="entry name" value="H85945"/>
</dbReference>
<dbReference type="RefSeq" id="NP_311799.1">
    <property type="nucleotide sequence ID" value="NC_002695.1"/>
</dbReference>
<dbReference type="RefSeq" id="WP_001182957.1">
    <property type="nucleotide sequence ID" value="NZ_VOAI01000003.1"/>
</dbReference>
<dbReference type="SMR" id="P67604"/>
<dbReference type="STRING" id="155864.Z4238"/>
<dbReference type="DNASU" id="961936"/>
<dbReference type="GeneID" id="75173001"/>
<dbReference type="GeneID" id="916409"/>
<dbReference type="KEGG" id="ece:Z4238"/>
<dbReference type="KEGG" id="ecs:ECs_3772"/>
<dbReference type="PATRIC" id="fig|386585.9.peg.3937"/>
<dbReference type="eggNOG" id="COG3097">
    <property type="taxonomic scope" value="Bacteria"/>
</dbReference>
<dbReference type="HOGENOM" id="CLU_152586_0_0_6"/>
<dbReference type="OMA" id="HARQENM"/>
<dbReference type="Proteomes" id="UP000000558">
    <property type="component" value="Chromosome"/>
</dbReference>
<dbReference type="Proteomes" id="UP000002519">
    <property type="component" value="Chromosome"/>
</dbReference>
<dbReference type="GO" id="GO:0005829">
    <property type="term" value="C:cytosol"/>
    <property type="evidence" value="ECO:0007669"/>
    <property type="project" value="TreeGrafter"/>
</dbReference>
<dbReference type="GO" id="GO:0016813">
    <property type="term" value="F:hydrolase activity, acting on carbon-nitrogen (but not peptide) bonds, in linear amidines"/>
    <property type="evidence" value="ECO:0007669"/>
    <property type="project" value="UniProtKB-UniRule"/>
</dbReference>
<dbReference type="GO" id="GO:0106251">
    <property type="term" value="F:N4-acetylcytidine amidohydrolase activity"/>
    <property type="evidence" value="ECO:0007669"/>
    <property type="project" value="RHEA"/>
</dbReference>
<dbReference type="CDD" id="cd06552">
    <property type="entry name" value="ASCH_yqfb_like"/>
    <property type="match status" value="1"/>
</dbReference>
<dbReference type="FunFam" id="2.30.130.30:FF:000001">
    <property type="entry name" value="UPF0267 protein YqfB"/>
    <property type="match status" value="1"/>
</dbReference>
<dbReference type="Gene3D" id="2.30.130.30">
    <property type="entry name" value="Hypothetical protein"/>
    <property type="match status" value="1"/>
</dbReference>
<dbReference type="HAMAP" id="MF_00684">
    <property type="entry name" value="ac4C_amidohydr"/>
    <property type="match status" value="1"/>
</dbReference>
<dbReference type="InterPro" id="IPR008314">
    <property type="entry name" value="AC4CH"/>
</dbReference>
<dbReference type="InterPro" id="IPR007374">
    <property type="entry name" value="ASCH_domain"/>
</dbReference>
<dbReference type="InterPro" id="IPR015947">
    <property type="entry name" value="PUA-like_sf"/>
</dbReference>
<dbReference type="NCBIfam" id="NF003443">
    <property type="entry name" value="PRK04980.1"/>
    <property type="match status" value="1"/>
</dbReference>
<dbReference type="PANTHER" id="PTHR38088">
    <property type="entry name" value="UCP029143 FAMILY PROTEIN"/>
    <property type="match status" value="1"/>
</dbReference>
<dbReference type="PANTHER" id="PTHR38088:SF2">
    <property type="entry name" value="UCP029143 FAMILY PROTEIN"/>
    <property type="match status" value="1"/>
</dbReference>
<dbReference type="Pfam" id="PF04266">
    <property type="entry name" value="ASCH"/>
    <property type="match status" value="1"/>
</dbReference>
<dbReference type="PIRSF" id="PIRSF029143">
    <property type="entry name" value="UCP029143"/>
    <property type="match status" value="1"/>
</dbReference>
<dbReference type="SMART" id="SM01022">
    <property type="entry name" value="ASCH"/>
    <property type="match status" value="1"/>
</dbReference>
<dbReference type="SUPFAM" id="SSF88697">
    <property type="entry name" value="PUA domain-like"/>
    <property type="match status" value="1"/>
</dbReference>
<proteinExistence type="inferred from homology"/>
<gene>
    <name type="primary">yqfB</name>
    <name type="ordered locus">Z4238</name>
    <name type="ordered locus">ECs3772</name>
</gene>
<reference key="1">
    <citation type="journal article" date="2001" name="Nature">
        <title>Genome sequence of enterohaemorrhagic Escherichia coli O157:H7.</title>
        <authorList>
            <person name="Perna N.T."/>
            <person name="Plunkett G. III"/>
            <person name="Burland V."/>
            <person name="Mau B."/>
            <person name="Glasner J.D."/>
            <person name="Rose D.J."/>
            <person name="Mayhew G.F."/>
            <person name="Evans P.S."/>
            <person name="Gregor J."/>
            <person name="Kirkpatrick H.A."/>
            <person name="Posfai G."/>
            <person name="Hackett J."/>
            <person name="Klink S."/>
            <person name="Boutin A."/>
            <person name="Shao Y."/>
            <person name="Miller L."/>
            <person name="Grotbeck E.J."/>
            <person name="Davis N.W."/>
            <person name="Lim A."/>
            <person name="Dimalanta E.T."/>
            <person name="Potamousis K."/>
            <person name="Apodaca J."/>
            <person name="Anantharaman T.S."/>
            <person name="Lin J."/>
            <person name="Yen G."/>
            <person name="Schwartz D.C."/>
            <person name="Welch R.A."/>
            <person name="Blattner F.R."/>
        </authorList>
    </citation>
    <scope>NUCLEOTIDE SEQUENCE [LARGE SCALE GENOMIC DNA]</scope>
    <source>
        <strain>O157:H7 / EDL933 / ATCC 700927 / EHEC</strain>
    </source>
</reference>
<reference key="2">
    <citation type="journal article" date="2001" name="DNA Res.">
        <title>Complete genome sequence of enterohemorrhagic Escherichia coli O157:H7 and genomic comparison with a laboratory strain K-12.</title>
        <authorList>
            <person name="Hayashi T."/>
            <person name="Makino K."/>
            <person name="Ohnishi M."/>
            <person name="Kurokawa K."/>
            <person name="Ishii K."/>
            <person name="Yokoyama K."/>
            <person name="Han C.-G."/>
            <person name="Ohtsubo E."/>
            <person name="Nakayama K."/>
            <person name="Murata T."/>
            <person name="Tanaka M."/>
            <person name="Tobe T."/>
            <person name="Iida T."/>
            <person name="Takami H."/>
            <person name="Honda T."/>
            <person name="Sasakawa C."/>
            <person name="Ogasawara N."/>
            <person name="Yasunaga T."/>
            <person name="Kuhara S."/>
            <person name="Shiba T."/>
            <person name="Hattori M."/>
            <person name="Shinagawa H."/>
        </authorList>
    </citation>
    <scope>NUCLEOTIDE SEQUENCE [LARGE SCALE GENOMIC DNA]</scope>
    <source>
        <strain>O157:H7 / Sakai / RIMD 0509952 / EHEC</strain>
    </source>
</reference>
<comment type="function">
    <text evidence="2">Catalyzes the hydrolysis of N(4)-acetylcytidine (ac4C).</text>
</comment>
<comment type="catalytic activity">
    <reaction evidence="2">
        <text>N(4)-acetylcytidine + H2O = cytidine + acetate + H(+)</text>
        <dbReference type="Rhea" id="RHEA:62932"/>
        <dbReference type="ChEBI" id="CHEBI:15377"/>
        <dbReference type="ChEBI" id="CHEBI:15378"/>
        <dbReference type="ChEBI" id="CHEBI:17562"/>
        <dbReference type="ChEBI" id="CHEBI:30089"/>
        <dbReference type="ChEBI" id="CHEBI:70989"/>
        <dbReference type="EC" id="3.5.1.135"/>
    </reaction>
</comment>
<comment type="catalytic activity">
    <reaction evidence="2">
        <text>N(4)-acetyl-2'-deoxycytidine + H2O = 2'-deoxycytidine + acetate + H(+)</text>
        <dbReference type="Rhea" id="RHEA:62936"/>
        <dbReference type="ChEBI" id="CHEBI:15377"/>
        <dbReference type="ChEBI" id="CHEBI:15378"/>
        <dbReference type="ChEBI" id="CHEBI:15698"/>
        <dbReference type="ChEBI" id="CHEBI:30089"/>
        <dbReference type="ChEBI" id="CHEBI:146133"/>
        <dbReference type="EC" id="3.5.1.135"/>
    </reaction>
</comment>
<comment type="catalytic activity">
    <reaction evidence="2">
        <text>N(4)-acetylcytosine + H2O = cytosine + acetate + H(+)</text>
        <dbReference type="Rhea" id="RHEA:62940"/>
        <dbReference type="ChEBI" id="CHEBI:15377"/>
        <dbReference type="ChEBI" id="CHEBI:15378"/>
        <dbReference type="ChEBI" id="CHEBI:16040"/>
        <dbReference type="ChEBI" id="CHEBI:30089"/>
        <dbReference type="ChEBI" id="CHEBI:146134"/>
        <dbReference type="EC" id="3.5.1.135"/>
    </reaction>
</comment>
<comment type="similarity">
    <text evidence="2">Belongs to the N(4)-acetylcytidine amidohydrolase family.</text>
</comment>
<sequence>MQPNDITFFQRFQDDILAGRKTITIRDESESHFKTGDVLRVGRFEDDGYFCTIEVTATSTVTLDTLTEKHAEQENMTLTELKKVIADIYPGQTQFYVIEFKCL</sequence>